<comment type="function">
    <text evidence="1">Converts 2C-methyl-D-erythritol 2,4-cyclodiphosphate (ME-2,4cPP) into 1-hydroxy-2-methyl-2-(E)-butenyl 4-diphosphate.</text>
</comment>
<comment type="catalytic activity">
    <reaction evidence="1">
        <text>(2E)-4-hydroxy-3-methylbut-2-enyl diphosphate + oxidized [flavodoxin] + H2O + 2 H(+) = 2-C-methyl-D-erythritol 2,4-cyclic diphosphate + reduced [flavodoxin]</text>
        <dbReference type="Rhea" id="RHEA:43604"/>
        <dbReference type="Rhea" id="RHEA-COMP:10622"/>
        <dbReference type="Rhea" id="RHEA-COMP:10623"/>
        <dbReference type="ChEBI" id="CHEBI:15377"/>
        <dbReference type="ChEBI" id="CHEBI:15378"/>
        <dbReference type="ChEBI" id="CHEBI:57618"/>
        <dbReference type="ChEBI" id="CHEBI:58210"/>
        <dbReference type="ChEBI" id="CHEBI:58483"/>
        <dbReference type="ChEBI" id="CHEBI:128753"/>
        <dbReference type="EC" id="1.17.7.3"/>
    </reaction>
</comment>
<comment type="cofactor">
    <cofactor evidence="1">
        <name>[4Fe-4S] cluster</name>
        <dbReference type="ChEBI" id="CHEBI:49883"/>
    </cofactor>
    <text evidence="1">Binds 1 [4Fe-4S] cluster.</text>
</comment>
<comment type="pathway">
    <text evidence="1">Isoprenoid biosynthesis; isopentenyl diphosphate biosynthesis via DXP pathway; isopentenyl diphosphate from 1-deoxy-D-xylulose 5-phosphate: step 5/6.</text>
</comment>
<comment type="similarity">
    <text evidence="1">Belongs to the IspG family.</text>
</comment>
<proteinExistence type="inferred from homology"/>
<protein>
    <recommendedName>
        <fullName evidence="1">4-hydroxy-3-methylbut-2-en-1-yl diphosphate synthase (flavodoxin)</fullName>
        <ecNumber evidence="1">1.17.7.3</ecNumber>
    </recommendedName>
    <alternativeName>
        <fullName evidence="1">1-hydroxy-2-methyl-2-(E)-butenyl 4-diphosphate synthase</fullName>
    </alternativeName>
</protein>
<keyword id="KW-0004">4Fe-4S</keyword>
<keyword id="KW-0408">Iron</keyword>
<keyword id="KW-0411">Iron-sulfur</keyword>
<keyword id="KW-0414">Isoprene biosynthesis</keyword>
<keyword id="KW-0479">Metal-binding</keyword>
<keyword id="KW-0560">Oxidoreductase</keyword>
<name>ISPG_ECOSM</name>
<organism>
    <name type="scientific">Escherichia coli (strain SMS-3-5 / SECEC)</name>
    <dbReference type="NCBI Taxonomy" id="439855"/>
    <lineage>
        <taxon>Bacteria</taxon>
        <taxon>Pseudomonadati</taxon>
        <taxon>Pseudomonadota</taxon>
        <taxon>Gammaproteobacteria</taxon>
        <taxon>Enterobacterales</taxon>
        <taxon>Enterobacteriaceae</taxon>
        <taxon>Escherichia</taxon>
    </lineage>
</organism>
<reference key="1">
    <citation type="journal article" date="2008" name="J. Bacteriol.">
        <title>Insights into the environmental resistance gene pool from the genome sequence of the multidrug-resistant environmental isolate Escherichia coli SMS-3-5.</title>
        <authorList>
            <person name="Fricke W.F."/>
            <person name="Wright M.S."/>
            <person name="Lindell A.H."/>
            <person name="Harkins D.M."/>
            <person name="Baker-Austin C."/>
            <person name="Ravel J."/>
            <person name="Stepanauskas R."/>
        </authorList>
    </citation>
    <scope>NUCLEOTIDE SEQUENCE [LARGE SCALE GENOMIC DNA]</scope>
    <source>
        <strain>SMS-3-5 / SECEC</strain>
    </source>
</reference>
<evidence type="ECO:0000255" key="1">
    <source>
        <dbReference type="HAMAP-Rule" id="MF_00159"/>
    </source>
</evidence>
<sequence>MHNQAPIQRRKSTRIYVGNVPIGDGAPIAVQSMTNTRTTDVEATVNQIKALERVGADIVRVSVPTMDAAEAFKLIKQQVNVPLVADIHFDYRIALKVAEYGVDCLRINPGNIGNEERIRMVVDCARDKNIPIRIGVNAGSLEKDLQEKYGEPTPQALLESAMRHVDHLDRLNFEQFKVSVKASDVFLAVESYRLLAKQIDQPLHLGITEAGGARSGAVKSAIGLGLLLSEGIGDTLRVSLAADPVEEIKVGFDILKSLRIRSRGINFIACPTCSRQEFDVIGTVNALEQRLEDIITPMDVSIIGCVVNGPGEALVSTLGVTGGNKKSGLYEDGVRKDRLDNNDMIDQLEARIRAKASQLDEARRIDVQQVEK</sequence>
<accession>B1LNH0</accession>
<dbReference type="EC" id="1.17.7.3" evidence="1"/>
<dbReference type="EMBL" id="CP000970">
    <property type="protein sequence ID" value="ACB18715.1"/>
    <property type="molecule type" value="Genomic_DNA"/>
</dbReference>
<dbReference type="RefSeq" id="WP_000551813.1">
    <property type="nucleotide sequence ID" value="NC_010498.1"/>
</dbReference>
<dbReference type="SMR" id="B1LNH0"/>
<dbReference type="KEGG" id="ecm:EcSMS35_2667"/>
<dbReference type="HOGENOM" id="CLU_042258_0_0_6"/>
<dbReference type="UniPathway" id="UPA00056">
    <property type="reaction ID" value="UER00096"/>
</dbReference>
<dbReference type="Proteomes" id="UP000007011">
    <property type="component" value="Chromosome"/>
</dbReference>
<dbReference type="GO" id="GO:0051539">
    <property type="term" value="F:4 iron, 4 sulfur cluster binding"/>
    <property type="evidence" value="ECO:0007669"/>
    <property type="project" value="UniProtKB-UniRule"/>
</dbReference>
<dbReference type="GO" id="GO:0046429">
    <property type="term" value="F:4-hydroxy-3-methylbut-2-en-1-yl diphosphate synthase activity (ferredoxin)"/>
    <property type="evidence" value="ECO:0007669"/>
    <property type="project" value="UniProtKB-UniRule"/>
</dbReference>
<dbReference type="GO" id="GO:0141197">
    <property type="term" value="F:4-hydroxy-3-methylbut-2-enyl-diphosphate synthase activity (flavodoxin)"/>
    <property type="evidence" value="ECO:0007669"/>
    <property type="project" value="UniProtKB-EC"/>
</dbReference>
<dbReference type="GO" id="GO:0005506">
    <property type="term" value="F:iron ion binding"/>
    <property type="evidence" value="ECO:0007669"/>
    <property type="project" value="InterPro"/>
</dbReference>
<dbReference type="GO" id="GO:0019288">
    <property type="term" value="P:isopentenyl diphosphate biosynthetic process, methylerythritol 4-phosphate pathway"/>
    <property type="evidence" value="ECO:0007669"/>
    <property type="project" value="UniProtKB-UniRule"/>
</dbReference>
<dbReference type="GO" id="GO:0016114">
    <property type="term" value="P:terpenoid biosynthetic process"/>
    <property type="evidence" value="ECO:0007669"/>
    <property type="project" value="InterPro"/>
</dbReference>
<dbReference type="FunFam" id="3.20.20.20:FF:000001">
    <property type="entry name" value="4-hydroxy-3-methylbut-2-en-1-yl diphosphate synthase (flavodoxin)"/>
    <property type="match status" value="1"/>
</dbReference>
<dbReference type="FunFam" id="3.30.413.10:FF:000002">
    <property type="entry name" value="4-hydroxy-3-methylbut-2-en-1-yl diphosphate synthase (flavodoxin)"/>
    <property type="match status" value="1"/>
</dbReference>
<dbReference type="Gene3D" id="3.20.20.20">
    <property type="entry name" value="Dihydropteroate synthase-like"/>
    <property type="match status" value="1"/>
</dbReference>
<dbReference type="Gene3D" id="3.30.413.10">
    <property type="entry name" value="Sulfite Reductase Hemoprotein, domain 1"/>
    <property type="match status" value="1"/>
</dbReference>
<dbReference type="HAMAP" id="MF_00159">
    <property type="entry name" value="IspG"/>
    <property type="match status" value="1"/>
</dbReference>
<dbReference type="InterPro" id="IPR011005">
    <property type="entry name" value="Dihydropteroate_synth-like_sf"/>
</dbReference>
<dbReference type="InterPro" id="IPR016425">
    <property type="entry name" value="IspG_bac"/>
</dbReference>
<dbReference type="InterPro" id="IPR004588">
    <property type="entry name" value="IspG_bac-typ"/>
</dbReference>
<dbReference type="InterPro" id="IPR045854">
    <property type="entry name" value="NO2/SO3_Rdtase_4Fe4S_sf"/>
</dbReference>
<dbReference type="NCBIfam" id="TIGR00612">
    <property type="entry name" value="ispG_gcpE"/>
    <property type="match status" value="1"/>
</dbReference>
<dbReference type="NCBIfam" id="NF001540">
    <property type="entry name" value="PRK00366.1"/>
    <property type="match status" value="1"/>
</dbReference>
<dbReference type="PANTHER" id="PTHR30454">
    <property type="entry name" value="4-HYDROXY-3-METHYLBUT-2-EN-1-YL DIPHOSPHATE SYNTHASE"/>
    <property type="match status" value="1"/>
</dbReference>
<dbReference type="PANTHER" id="PTHR30454:SF0">
    <property type="entry name" value="4-HYDROXY-3-METHYLBUT-2-EN-1-YL DIPHOSPHATE SYNTHASE (FERREDOXIN), CHLOROPLASTIC"/>
    <property type="match status" value="1"/>
</dbReference>
<dbReference type="Pfam" id="PF04551">
    <property type="entry name" value="GcpE"/>
    <property type="match status" value="1"/>
</dbReference>
<dbReference type="PIRSF" id="PIRSF004640">
    <property type="entry name" value="IspG"/>
    <property type="match status" value="1"/>
</dbReference>
<dbReference type="SUPFAM" id="SSF51717">
    <property type="entry name" value="Dihydropteroate synthetase-like"/>
    <property type="match status" value="1"/>
</dbReference>
<dbReference type="SUPFAM" id="SSF56014">
    <property type="entry name" value="Nitrite and sulphite reductase 4Fe-4S domain-like"/>
    <property type="match status" value="1"/>
</dbReference>
<gene>
    <name evidence="1" type="primary">ispG</name>
    <name type="ordered locus">EcSMS35_2667</name>
</gene>
<feature type="chain" id="PRO_1000191080" description="4-hydroxy-3-methylbut-2-en-1-yl diphosphate synthase (flavodoxin)">
    <location>
        <begin position="1"/>
        <end position="372"/>
    </location>
</feature>
<feature type="binding site" evidence="1">
    <location>
        <position position="270"/>
    </location>
    <ligand>
        <name>[4Fe-4S] cluster</name>
        <dbReference type="ChEBI" id="CHEBI:49883"/>
    </ligand>
</feature>
<feature type="binding site" evidence="1">
    <location>
        <position position="273"/>
    </location>
    <ligand>
        <name>[4Fe-4S] cluster</name>
        <dbReference type="ChEBI" id="CHEBI:49883"/>
    </ligand>
</feature>
<feature type="binding site" evidence="1">
    <location>
        <position position="305"/>
    </location>
    <ligand>
        <name>[4Fe-4S] cluster</name>
        <dbReference type="ChEBI" id="CHEBI:49883"/>
    </ligand>
</feature>
<feature type="binding site" evidence="1">
    <location>
        <position position="312"/>
    </location>
    <ligand>
        <name>[4Fe-4S] cluster</name>
        <dbReference type="ChEBI" id="CHEBI:49883"/>
    </ligand>
</feature>